<accession>P80567</accession>
<keyword id="KW-0903">Direct protein sequencing</keyword>
<keyword id="KW-0260">Enterotoxin</keyword>
<keyword id="KW-0800">Toxin</keyword>
<keyword id="KW-0843">Virulence</keyword>
<dbReference type="eggNOG" id="COG0083">
    <property type="taxonomic scope" value="Bacteria"/>
</dbReference>
<dbReference type="GO" id="GO:0090729">
    <property type="term" value="F:toxin activity"/>
    <property type="evidence" value="ECO:0007669"/>
    <property type="project" value="UniProtKB-KW"/>
</dbReference>
<feature type="chain" id="PRO_0000087074" description="Enterotoxin">
    <location>
        <begin position="1"/>
        <end position="45" status="greater than"/>
    </location>
</feature>
<feature type="non-terminal residue">
    <location>
        <position position="45"/>
    </location>
</feature>
<reference key="1">
    <citation type="journal article" date="1996" name="FEMS Microbiol. Lett.">
        <title>Characterisation of a non-haemolytic enterotoxin complex from Bacillus cereus isolated after a foodborne outbreak.</title>
        <authorList>
            <person name="Lund T."/>
            <person name="Granum P.E."/>
        </authorList>
    </citation>
    <scope>PROTEIN SEQUENCE</scope>
    <scope>FUNCTION</scope>
    <scope>SUBUNIT</scope>
    <source>
        <strain>0075-95</strain>
    </source>
</reference>
<name>ETX1_BACCE</name>
<sequence length="45" mass="4787">AESTVKQAPVXAVAKAYNDYEEYSLGPEGLKDAMEXTGSNALVMD</sequence>
<organism>
    <name type="scientific">Bacillus cereus</name>
    <dbReference type="NCBI Taxonomy" id="1396"/>
    <lineage>
        <taxon>Bacteria</taxon>
        <taxon>Bacillati</taxon>
        <taxon>Bacillota</taxon>
        <taxon>Bacilli</taxon>
        <taxon>Bacillales</taxon>
        <taxon>Bacillaceae</taxon>
        <taxon>Bacillus</taxon>
        <taxon>Bacillus cereus group</taxon>
    </lineage>
</organism>
<evidence type="ECO:0000269" key="1">
    <source>
    </source>
</evidence>
<evidence type="ECO:0000305" key="2">
    <source>
    </source>
</evidence>
<proteinExistence type="evidence at protein level"/>
<protein>
    <recommendedName>
        <fullName>Enterotoxin</fullName>
    </recommendedName>
    <alternativeName>
        <fullName>37 kDa protein</fullName>
    </alternativeName>
</protein>
<comment type="function">
    <text evidence="1">One of 3 components required for cytotoxicity (tested in African green monkey Vero cells); the complex is not hemolytic.</text>
</comment>
<comment type="subunit">
    <text evidence="1">One of 3 components (of 35, 45 and 105 kDa) of the enterotoxin.</text>
</comment>
<comment type="miscellaneous">
    <text evidence="2">This strain was isolated from a food poisoning outbreak in Norway in 1995.</text>
</comment>